<protein>
    <recommendedName>
        <fullName evidence="1">Trigger factor</fullName>
        <shortName evidence="1">TF</shortName>
        <ecNumber evidence="1">5.2.1.8</ecNumber>
    </recommendedName>
    <alternativeName>
        <fullName evidence="1">PPIase</fullName>
    </alternativeName>
</protein>
<feature type="chain" id="PRO_0000179454" description="Trigger factor">
    <location>
        <begin position="1"/>
        <end position="451"/>
    </location>
</feature>
<feature type="domain" description="PPIase FKBP-type" evidence="1">
    <location>
        <begin position="170"/>
        <end position="256"/>
    </location>
</feature>
<comment type="function">
    <text evidence="1">Involved in protein export. Acts as a chaperone by maintaining the newly synthesized protein in an open conformation. Functions as a peptidyl-prolyl cis-trans isomerase.</text>
</comment>
<comment type="catalytic activity">
    <reaction evidence="1">
        <text>[protein]-peptidylproline (omega=180) = [protein]-peptidylproline (omega=0)</text>
        <dbReference type="Rhea" id="RHEA:16237"/>
        <dbReference type="Rhea" id="RHEA-COMP:10747"/>
        <dbReference type="Rhea" id="RHEA-COMP:10748"/>
        <dbReference type="ChEBI" id="CHEBI:83833"/>
        <dbReference type="ChEBI" id="CHEBI:83834"/>
        <dbReference type="EC" id="5.2.1.8"/>
    </reaction>
</comment>
<comment type="subcellular location">
    <subcellularLocation>
        <location>Cytoplasm</location>
    </subcellularLocation>
    <text evidence="1">About half TF is bound to the ribosome near the polypeptide exit tunnel while the other half is free in the cytoplasm.</text>
</comment>
<comment type="domain">
    <text evidence="1">Consists of 3 domains; the N-terminus binds the ribosome, the middle domain has PPIase activity, while the C-terminus has intrinsic chaperone activity on its own.</text>
</comment>
<comment type="similarity">
    <text evidence="1">Belongs to the FKBP-type PPIase family. Tig subfamily.</text>
</comment>
<name>TIG_TREDE</name>
<accession>Q73M39</accession>
<gene>
    <name evidence="1" type="primary">tig</name>
    <name type="ordered locus">TDE_1671</name>
</gene>
<reference key="1">
    <citation type="journal article" date="2004" name="Proc. Natl. Acad. Sci. U.S.A.">
        <title>Comparison of the genome of the oral pathogen Treponema denticola with other spirochete genomes.</title>
        <authorList>
            <person name="Seshadri R."/>
            <person name="Myers G.S.A."/>
            <person name="Tettelin H."/>
            <person name="Eisen J.A."/>
            <person name="Heidelberg J.F."/>
            <person name="Dodson R.J."/>
            <person name="Davidsen T.M."/>
            <person name="DeBoy R.T."/>
            <person name="Fouts D.E."/>
            <person name="Haft D.H."/>
            <person name="Selengut J."/>
            <person name="Ren Q."/>
            <person name="Brinkac L.M."/>
            <person name="Madupu R."/>
            <person name="Kolonay J.F."/>
            <person name="Durkin S.A."/>
            <person name="Daugherty S.C."/>
            <person name="Shetty J."/>
            <person name="Shvartsbeyn A."/>
            <person name="Gebregeorgis E."/>
            <person name="Geer K."/>
            <person name="Tsegaye G."/>
            <person name="Malek J.A."/>
            <person name="Ayodeji B."/>
            <person name="Shatsman S."/>
            <person name="McLeod M.P."/>
            <person name="Smajs D."/>
            <person name="Howell J.K."/>
            <person name="Pal S."/>
            <person name="Amin A."/>
            <person name="Vashisth P."/>
            <person name="McNeill T.Z."/>
            <person name="Xiang Q."/>
            <person name="Sodergren E."/>
            <person name="Baca E."/>
            <person name="Weinstock G.M."/>
            <person name="Norris S.J."/>
            <person name="Fraser C.M."/>
            <person name="Paulsen I.T."/>
        </authorList>
    </citation>
    <scope>NUCLEOTIDE SEQUENCE [LARGE SCALE GENOMIC DNA]</scope>
    <source>
        <strain>ATCC 35405 / DSM 14222 / CIP 103919 / JCM 8153 / KCTC 15104</strain>
    </source>
</reference>
<dbReference type="EC" id="5.2.1.8" evidence="1"/>
<dbReference type="EMBL" id="AE017226">
    <property type="protein sequence ID" value="AAS12187.1"/>
    <property type="molecule type" value="Genomic_DNA"/>
</dbReference>
<dbReference type="RefSeq" id="NP_972276.1">
    <property type="nucleotide sequence ID" value="NC_002967.9"/>
</dbReference>
<dbReference type="RefSeq" id="WP_002679366.1">
    <property type="nucleotide sequence ID" value="NC_002967.9"/>
</dbReference>
<dbReference type="SMR" id="Q73M39"/>
<dbReference type="STRING" id="243275.TDE_1671"/>
<dbReference type="PaxDb" id="243275-TDE_1671"/>
<dbReference type="GeneID" id="2739012"/>
<dbReference type="KEGG" id="tde:TDE_1671"/>
<dbReference type="PATRIC" id="fig|243275.7.peg.1597"/>
<dbReference type="eggNOG" id="COG0544">
    <property type="taxonomic scope" value="Bacteria"/>
</dbReference>
<dbReference type="HOGENOM" id="CLU_033058_3_1_12"/>
<dbReference type="OrthoDB" id="9767721at2"/>
<dbReference type="Proteomes" id="UP000008212">
    <property type="component" value="Chromosome"/>
</dbReference>
<dbReference type="GO" id="GO:0005737">
    <property type="term" value="C:cytoplasm"/>
    <property type="evidence" value="ECO:0007669"/>
    <property type="project" value="UniProtKB-SubCell"/>
</dbReference>
<dbReference type="GO" id="GO:0003755">
    <property type="term" value="F:peptidyl-prolyl cis-trans isomerase activity"/>
    <property type="evidence" value="ECO:0007669"/>
    <property type="project" value="UniProtKB-UniRule"/>
</dbReference>
<dbReference type="GO" id="GO:0044183">
    <property type="term" value="F:protein folding chaperone"/>
    <property type="evidence" value="ECO:0007669"/>
    <property type="project" value="TreeGrafter"/>
</dbReference>
<dbReference type="GO" id="GO:0043022">
    <property type="term" value="F:ribosome binding"/>
    <property type="evidence" value="ECO:0007669"/>
    <property type="project" value="TreeGrafter"/>
</dbReference>
<dbReference type="GO" id="GO:0051083">
    <property type="term" value="P:'de novo' cotranslational protein folding"/>
    <property type="evidence" value="ECO:0007669"/>
    <property type="project" value="TreeGrafter"/>
</dbReference>
<dbReference type="GO" id="GO:0051301">
    <property type="term" value="P:cell division"/>
    <property type="evidence" value="ECO:0007669"/>
    <property type="project" value="UniProtKB-KW"/>
</dbReference>
<dbReference type="GO" id="GO:0061077">
    <property type="term" value="P:chaperone-mediated protein folding"/>
    <property type="evidence" value="ECO:0007669"/>
    <property type="project" value="TreeGrafter"/>
</dbReference>
<dbReference type="GO" id="GO:0015031">
    <property type="term" value="P:protein transport"/>
    <property type="evidence" value="ECO:0007669"/>
    <property type="project" value="UniProtKB-UniRule"/>
</dbReference>
<dbReference type="GO" id="GO:0043335">
    <property type="term" value="P:protein unfolding"/>
    <property type="evidence" value="ECO:0007669"/>
    <property type="project" value="TreeGrafter"/>
</dbReference>
<dbReference type="Gene3D" id="3.10.50.40">
    <property type="match status" value="1"/>
</dbReference>
<dbReference type="Gene3D" id="3.30.70.1050">
    <property type="entry name" value="Trigger factor ribosome-binding domain"/>
    <property type="match status" value="1"/>
</dbReference>
<dbReference type="Gene3D" id="1.10.3120.10">
    <property type="entry name" value="Trigger factor, C-terminal domain"/>
    <property type="match status" value="1"/>
</dbReference>
<dbReference type="HAMAP" id="MF_00303">
    <property type="entry name" value="Trigger_factor_Tig"/>
    <property type="match status" value="1"/>
</dbReference>
<dbReference type="InterPro" id="IPR046357">
    <property type="entry name" value="PPIase_dom_sf"/>
</dbReference>
<dbReference type="InterPro" id="IPR001179">
    <property type="entry name" value="PPIase_FKBP_dom"/>
</dbReference>
<dbReference type="InterPro" id="IPR005215">
    <property type="entry name" value="Trig_fac"/>
</dbReference>
<dbReference type="InterPro" id="IPR008880">
    <property type="entry name" value="Trigger_fac_C"/>
</dbReference>
<dbReference type="InterPro" id="IPR037041">
    <property type="entry name" value="Trigger_fac_C_sf"/>
</dbReference>
<dbReference type="InterPro" id="IPR008881">
    <property type="entry name" value="Trigger_fac_ribosome-bd_bac"/>
</dbReference>
<dbReference type="InterPro" id="IPR036611">
    <property type="entry name" value="Trigger_fac_ribosome-bd_sf"/>
</dbReference>
<dbReference type="InterPro" id="IPR027304">
    <property type="entry name" value="Trigger_fact/SurA_dom_sf"/>
</dbReference>
<dbReference type="NCBIfam" id="TIGR00115">
    <property type="entry name" value="tig"/>
    <property type="match status" value="1"/>
</dbReference>
<dbReference type="PANTHER" id="PTHR30560">
    <property type="entry name" value="TRIGGER FACTOR CHAPERONE AND PEPTIDYL-PROLYL CIS/TRANS ISOMERASE"/>
    <property type="match status" value="1"/>
</dbReference>
<dbReference type="PANTHER" id="PTHR30560:SF3">
    <property type="entry name" value="TRIGGER FACTOR-LIKE PROTEIN TIG, CHLOROPLASTIC"/>
    <property type="match status" value="1"/>
</dbReference>
<dbReference type="Pfam" id="PF00254">
    <property type="entry name" value="FKBP_C"/>
    <property type="match status" value="1"/>
</dbReference>
<dbReference type="Pfam" id="PF05698">
    <property type="entry name" value="Trigger_C"/>
    <property type="match status" value="1"/>
</dbReference>
<dbReference type="Pfam" id="PF05697">
    <property type="entry name" value="Trigger_N"/>
    <property type="match status" value="1"/>
</dbReference>
<dbReference type="PIRSF" id="PIRSF003095">
    <property type="entry name" value="Trigger_factor"/>
    <property type="match status" value="1"/>
</dbReference>
<dbReference type="SUPFAM" id="SSF54534">
    <property type="entry name" value="FKBP-like"/>
    <property type="match status" value="1"/>
</dbReference>
<dbReference type="SUPFAM" id="SSF109998">
    <property type="entry name" value="Triger factor/SurA peptide-binding domain-like"/>
    <property type="match status" value="1"/>
</dbReference>
<dbReference type="SUPFAM" id="SSF102735">
    <property type="entry name" value="Trigger factor ribosome-binding domain"/>
    <property type="match status" value="1"/>
</dbReference>
<sequence>MDYEKNVTLKEKSHAELSVKIKKSDVQESYKKLLNKYSKELQIPGFRKGKVPVSVLETKYGDAIKGDLAGDLIEESLKEIFESLDEYERPLPYSYPELNEKPELKVEEDFSFTVHYDVFPKVEIKKTEGFTIEVPEASVSEKDIKKELERLQERNALVTACKEGTSAEKDHIATIDYCELDDEGKTISGTERKDFVFTIGSGLNIYKIDDDIVGMKKGESKEITKTFPEDDSNKDLAGKTKKIKVTLTALKYKDLPALDDDFAQDINEKYKNLDELKADIKKKFEISVEEKIKSLQKNALTEQMVKEHTIDLPESMVRAELESRWMMMANQFRTTPEELEKMFGKGPQSKAALLEGWREDSEKTLKERVLIETLLKEKNIEVSDDEIEAEYVRLSERMDIALDELKKYYSNPREKEYLSEGLKEEKLFKALYEKSTIKKGKKLTFDELLKD</sequence>
<keyword id="KW-0131">Cell cycle</keyword>
<keyword id="KW-0132">Cell division</keyword>
<keyword id="KW-0143">Chaperone</keyword>
<keyword id="KW-0963">Cytoplasm</keyword>
<keyword id="KW-0413">Isomerase</keyword>
<keyword id="KW-1185">Reference proteome</keyword>
<keyword id="KW-0697">Rotamase</keyword>
<evidence type="ECO:0000255" key="1">
    <source>
        <dbReference type="HAMAP-Rule" id="MF_00303"/>
    </source>
</evidence>
<proteinExistence type="inferred from homology"/>
<organism>
    <name type="scientific">Treponema denticola (strain ATCC 35405 / DSM 14222 / CIP 103919 / JCM 8153 / KCTC 15104)</name>
    <dbReference type="NCBI Taxonomy" id="243275"/>
    <lineage>
        <taxon>Bacteria</taxon>
        <taxon>Pseudomonadati</taxon>
        <taxon>Spirochaetota</taxon>
        <taxon>Spirochaetia</taxon>
        <taxon>Spirochaetales</taxon>
        <taxon>Treponemataceae</taxon>
        <taxon>Treponema</taxon>
    </lineage>
</organism>